<sequence>MTEKKYIVALDQGTTSSRAVVMDHDANIISVSQREFEQIYPKPGWVEHDPMEIWATQSSTLVEVLAKADISSDQIAAIGITNQRETTIVWEKETGKPIYNAIVWQCRRTAEICEHLKRDGLEDYIRSNTGLVLDPYFSGTKVKWILDHVEGSHERARRGELLFGTVDTWLIWKMTQGRVHVTDYTNASRTMLFNIHTLDWDDKMLEVLDIPREMLPEVRRSSEVYGQTNIGGKGGTRIPISGIAGDQQAALFGQLCVKEGMAKNTYGTGCFMLMNTGEKAVKSENGLLTTIACGPTGEVNYALEGAVFMAGASIQWLRDEMKLINDAYDSEYFATKVQNTNGVYVVPAFTGLGAPYWDPYARGAIFGLTRGVNANHIIRATLESIAYQTRDVLEAMQADSGIRLHALRVDGGAVANNFLMQFQSDILGTRVERPEVREVTALGAAYLAGLAVGFWQNLDELQEKAVIEREFRPGIETTERNYRYAGWKKAVKRAMAWEEHDE</sequence>
<protein>
    <recommendedName>
        <fullName evidence="1">Glycerol kinase</fullName>
        <ecNumber evidence="1">2.7.1.30</ecNumber>
    </recommendedName>
    <alternativeName>
        <fullName evidence="1">ATP:glycerol 3-phosphotransferase</fullName>
    </alternativeName>
    <alternativeName>
        <fullName evidence="1">Glycerokinase</fullName>
        <shortName evidence="1">GK</shortName>
    </alternativeName>
</protein>
<name>GLPK_SHIFL</name>
<dbReference type="EC" id="2.7.1.30" evidence="1"/>
<dbReference type="EMBL" id="AE005674">
    <property type="protein sequence ID" value="AAN45437.1"/>
    <property type="status" value="ALT_FRAME"/>
    <property type="molecule type" value="Genomic_DNA"/>
</dbReference>
<dbReference type="EMBL" id="AE014073">
    <property type="protein sequence ID" value="AAP18763.1"/>
    <property type="molecule type" value="Genomic_DNA"/>
</dbReference>
<dbReference type="RefSeq" id="NP_709730.1">
    <property type="nucleotide sequence ID" value="NC_004337.2"/>
</dbReference>
<dbReference type="SMR" id="Q7UB84"/>
<dbReference type="STRING" id="198214.SF4004"/>
<dbReference type="PaxDb" id="198214-SF4004"/>
<dbReference type="GeneID" id="1025411"/>
<dbReference type="KEGG" id="sfl:SF4004"/>
<dbReference type="KEGG" id="sfx:S3743"/>
<dbReference type="PATRIC" id="fig|198214.7.peg.4718"/>
<dbReference type="HOGENOM" id="CLU_009281_2_3_6"/>
<dbReference type="UniPathway" id="UPA00618">
    <property type="reaction ID" value="UER00672"/>
</dbReference>
<dbReference type="Proteomes" id="UP000001006">
    <property type="component" value="Chromosome"/>
</dbReference>
<dbReference type="Proteomes" id="UP000002673">
    <property type="component" value="Chromosome"/>
</dbReference>
<dbReference type="GO" id="GO:0005829">
    <property type="term" value="C:cytosol"/>
    <property type="evidence" value="ECO:0007669"/>
    <property type="project" value="TreeGrafter"/>
</dbReference>
<dbReference type="GO" id="GO:0005524">
    <property type="term" value="F:ATP binding"/>
    <property type="evidence" value="ECO:0007669"/>
    <property type="project" value="UniProtKB-UniRule"/>
</dbReference>
<dbReference type="GO" id="GO:0004370">
    <property type="term" value="F:glycerol kinase activity"/>
    <property type="evidence" value="ECO:0000250"/>
    <property type="project" value="UniProtKB"/>
</dbReference>
<dbReference type="GO" id="GO:0046872">
    <property type="term" value="F:metal ion binding"/>
    <property type="evidence" value="ECO:0007669"/>
    <property type="project" value="UniProtKB-KW"/>
</dbReference>
<dbReference type="GO" id="GO:0019563">
    <property type="term" value="P:glycerol catabolic process"/>
    <property type="evidence" value="ECO:0007669"/>
    <property type="project" value="UniProtKB-UniRule"/>
</dbReference>
<dbReference type="GO" id="GO:0006071">
    <property type="term" value="P:glycerol metabolic process"/>
    <property type="evidence" value="ECO:0000250"/>
    <property type="project" value="UniProtKB"/>
</dbReference>
<dbReference type="GO" id="GO:0006072">
    <property type="term" value="P:glycerol-3-phosphate metabolic process"/>
    <property type="evidence" value="ECO:0007669"/>
    <property type="project" value="InterPro"/>
</dbReference>
<dbReference type="CDD" id="cd07786">
    <property type="entry name" value="FGGY_EcGK_like"/>
    <property type="match status" value="1"/>
</dbReference>
<dbReference type="FunFam" id="3.30.420.40:FF:000007">
    <property type="entry name" value="Glycerol kinase"/>
    <property type="match status" value="1"/>
</dbReference>
<dbReference type="FunFam" id="3.30.420.40:FF:000008">
    <property type="entry name" value="Glycerol kinase"/>
    <property type="match status" value="1"/>
</dbReference>
<dbReference type="Gene3D" id="3.30.420.40">
    <property type="match status" value="2"/>
</dbReference>
<dbReference type="HAMAP" id="MF_00186">
    <property type="entry name" value="Glycerol_kin"/>
    <property type="match status" value="1"/>
</dbReference>
<dbReference type="InterPro" id="IPR043129">
    <property type="entry name" value="ATPase_NBD"/>
</dbReference>
<dbReference type="InterPro" id="IPR000577">
    <property type="entry name" value="Carb_kinase_FGGY"/>
</dbReference>
<dbReference type="InterPro" id="IPR018483">
    <property type="entry name" value="Carb_kinase_FGGY_CS"/>
</dbReference>
<dbReference type="InterPro" id="IPR018485">
    <property type="entry name" value="FGGY_C"/>
</dbReference>
<dbReference type="InterPro" id="IPR018484">
    <property type="entry name" value="FGGY_N"/>
</dbReference>
<dbReference type="InterPro" id="IPR005999">
    <property type="entry name" value="Glycerol_kin"/>
</dbReference>
<dbReference type="NCBIfam" id="TIGR01311">
    <property type="entry name" value="glycerol_kin"/>
    <property type="match status" value="1"/>
</dbReference>
<dbReference type="NCBIfam" id="NF000756">
    <property type="entry name" value="PRK00047.1"/>
    <property type="match status" value="1"/>
</dbReference>
<dbReference type="PANTHER" id="PTHR10196:SF69">
    <property type="entry name" value="GLYCEROL KINASE"/>
    <property type="match status" value="1"/>
</dbReference>
<dbReference type="PANTHER" id="PTHR10196">
    <property type="entry name" value="SUGAR KINASE"/>
    <property type="match status" value="1"/>
</dbReference>
<dbReference type="Pfam" id="PF02782">
    <property type="entry name" value="FGGY_C"/>
    <property type="match status" value="1"/>
</dbReference>
<dbReference type="Pfam" id="PF00370">
    <property type="entry name" value="FGGY_N"/>
    <property type="match status" value="1"/>
</dbReference>
<dbReference type="PIRSF" id="PIRSF000538">
    <property type="entry name" value="GlpK"/>
    <property type="match status" value="1"/>
</dbReference>
<dbReference type="SUPFAM" id="SSF53067">
    <property type="entry name" value="Actin-like ATPase domain"/>
    <property type="match status" value="2"/>
</dbReference>
<dbReference type="PROSITE" id="PS00933">
    <property type="entry name" value="FGGY_KINASES_1"/>
    <property type="match status" value="1"/>
</dbReference>
<dbReference type="PROSITE" id="PS00445">
    <property type="entry name" value="FGGY_KINASES_2"/>
    <property type="match status" value="1"/>
</dbReference>
<comment type="function">
    <text evidence="1">Key enzyme in the regulation of glycerol uptake and metabolism. Catalyzes the phosphorylation of glycerol to yield sn-glycerol 3-phosphate.</text>
</comment>
<comment type="catalytic activity">
    <reaction evidence="1">
        <text>glycerol + ATP = sn-glycerol 3-phosphate + ADP + H(+)</text>
        <dbReference type="Rhea" id="RHEA:21644"/>
        <dbReference type="ChEBI" id="CHEBI:15378"/>
        <dbReference type="ChEBI" id="CHEBI:17754"/>
        <dbReference type="ChEBI" id="CHEBI:30616"/>
        <dbReference type="ChEBI" id="CHEBI:57597"/>
        <dbReference type="ChEBI" id="CHEBI:456216"/>
        <dbReference type="EC" id="2.7.1.30"/>
    </reaction>
</comment>
<comment type="activity regulation">
    <text evidence="1">Activity of this regulatory enzyme is affected by several metabolites. Allosterically and non-competitively inhibited by fructose 1,6-bisphosphate (FBP) and unphosphorylated phosphocarrier protein EIIA-Glc (III-Glc), an integral component of the bacterial phosphotransferase (PTS) system.</text>
</comment>
<comment type="pathway">
    <text evidence="1">Polyol metabolism; glycerol degradation via glycerol kinase pathway; sn-glycerol 3-phosphate from glycerol: step 1/1.</text>
</comment>
<comment type="subunit">
    <text evidence="1">Homotetramer and homodimer (in equilibrium). Heterodimer with EIIA-Glc. Binds 1 zinc ion per glycerol kinase EIIA-Glc dimer. The zinc ion is important for dimerization.</text>
</comment>
<comment type="similarity">
    <text evidence="1">Belongs to the FGGY kinase family.</text>
</comment>
<comment type="sequence caution" evidence="2">
    <conflict type="frameshift">
        <sequence resource="EMBL-CDS" id="AAN45437"/>
    </conflict>
</comment>
<keyword id="KW-0021">Allosteric enzyme</keyword>
<keyword id="KW-0067">ATP-binding</keyword>
<keyword id="KW-0319">Glycerol metabolism</keyword>
<keyword id="KW-0418">Kinase</keyword>
<keyword id="KW-0479">Metal-binding</keyword>
<keyword id="KW-0547">Nucleotide-binding</keyword>
<keyword id="KW-1185">Reference proteome</keyword>
<keyword id="KW-0808">Transferase</keyword>
<keyword id="KW-0862">Zinc</keyword>
<gene>
    <name evidence="1" type="primary">glpK</name>
    <name type="ordered locus">SF4004</name>
    <name type="ordered locus">S3743</name>
</gene>
<proteinExistence type="inferred from homology"/>
<feature type="chain" id="PRO_0000059488" description="Glycerol kinase">
    <location>
        <begin position="1"/>
        <end position="502"/>
    </location>
</feature>
<feature type="binding site" evidence="1">
    <location>
        <position position="14"/>
    </location>
    <ligand>
        <name>ADP</name>
        <dbReference type="ChEBI" id="CHEBI:456216"/>
    </ligand>
</feature>
<feature type="binding site" evidence="1">
    <location>
        <position position="14"/>
    </location>
    <ligand>
        <name>ATP</name>
        <dbReference type="ChEBI" id="CHEBI:30616"/>
    </ligand>
</feature>
<feature type="binding site" evidence="1">
    <location>
        <position position="14"/>
    </location>
    <ligand>
        <name>sn-glycerol 3-phosphate</name>
        <dbReference type="ChEBI" id="CHEBI:57597"/>
    </ligand>
</feature>
<feature type="binding site" evidence="1">
    <location>
        <position position="15"/>
    </location>
    <ligand>
        <name>ATP</name>
        <dbReference type="ChEBI" id="CHEBI:30616"/>
    </ligand>
</feature>
<feature type="binding site" evidence="1">
    <location>
        <position position="16"/>
    </location>
    <ligand>
        <name>ATP</name>
        <dbReference type="ChEBI" id="CHEBI:30616"/>
    </ligand>
</feature>
<feature type="binding site" evidence="1">
    <location>
        <position position="18"/>
    </location>
    <ligand>
        <name>ADP</name>
        <dbReference type="ChEBI" id="CHEBI:456216"/>
    </ligand>
</feature>
<feature type="binding site" evidence="1">
    <location>
        <position position="84"/>
    </location>
    <ligand>
        <name>glycerol</name>
        <dbReference type="ChEBI" id="CHEBI:17754"/>
    </ligand>
</feature>
<feature type="binding site" evidence="1">
    <location>
        <position position="84"/>
    </location>
    <ligand>
        <name>sn-glycerol 3-phosphate</name>
        <dbReference type="ChEBI" id="CHEBI:57597"/>
    </ligand>
</feature>
<feature type="binding site" evidence="1">
    <location>
        <position position="85"/>
    </location>
    <ligand>
        <name>glycerol</name>
        <dbReference type="ChEBI" id="CHEBI:17754"/>
    </ligand>
</feature>
<feature type="binding site" evidence="1">
    <location>
        <position position="85"/>
    </location>
    <ligand>
        <name>sn-glycerol 3-phosphate</name>
        <dbReference type="ChEBI" id="CHEBI:57597"/>
    </ligand>
</feature>
<feature type="binding site" evidence="1">
    <location>
        <position position="136"/>
    </location>
    <ligand>
        <name>glycerol</name>
        <dbReference type="ChEBI" id="CHEBI:17754"/>
    </ligand>
</feature>
<feature type="binding site" evidence="1">
    <location>
        <position position="136"/>
    </location>
    <ligand>
        <name>sn-glycerol 3-phosphate</name>
        <dbReference type="ChEBI" id="CHEBI:57597"/>
    </ligand>
</feature>
<feature type="binding site" evidence="1">
    <location>
        <position position="246"/>
    </location>
    <ligand>
        <name>glycerol</name>
        <dbReference type="ChEBI" id="CHEBI:17754"/>
    </ligand>
</feature>
<feature type="binding site" evidence="1">
    <location>
        <position position="246"/>
    </location>
    <ligand>
        <name>sn-glycerol 3-phosphate</name>
        <dbReference type="ChEBI" id="CHEBI:57597"/>
    </ligand>
</feature>
<feature type="binding site" evidence="1">
    <location>
        <position position="247"/>
    </location>
    <ligand>
        <name>glycerol</name>
        <dbReference type="ChEBI" id="CHEBI:17754"/>
    </ligand>
</feature>
<feature type="binding site" evidence="1">
    <location>
        <position position="268"/>
    </location>
    <ligand>
        <name>ADP</name>
        <dbReference type="ChEBI" id="CHEBI:456216"/>
    </ligand>
</feature>
<feature type="binding site" evidence="1">
    <location>
        <position position="268"/>
    </location>
    <ligand>
        <name>ATP</name>
        <dbReference type="ChEBI" id="CHEBI:30616"/>
    </ligand>
</feature>
<feature type="binding site" evidence="1">
    <location>
        <position position="311"/>
    </location>
    <ligand>
        <name>ADP</name>
        <dbReference type="ChEBI" id="CHEBI:456216"/>
    </ligand>
</feature>
<feature type="binding site" evidence="1">
    <location>
        <position position="311"/>
    </location>
    <ligand>
        <name>ATP</name>
        <dbReference type="ChEBI" id="CHEBI:30616"/>
    </ligand>
</feature>
<feature type="binding site" evidence="1">
    <location>
        <position position="315"/>
    </location>
    <ligand>
        <name>ATP</name>
        <dbReference type="ChEBI" id="CHEBI:30616"/>
    </ligand>
</feature>
<feature type="binding site" evidence="1">
    <location>
        <position position="412"/>
    </location>
    <ligand>
        <name>ADP</name>
        <dbReference type="ChEBI" id="CHEBI:456216"/>
    </ligand>
</feature>
<feature type="binding site" evidence="1">
    <location>
        <position position="412"/>
    </location>
    <ligand>
        <name>ATP</name>
        <dbReference type="ChEBI" id="CHEBI:30616"/>
    </ligand>
</feature>
<feature type="binding site" evidence="1">
    <location>
        <position position="416"/>
    </location>
    <ligand>
        <name>ADP</name>
        <dbReference type="ChEBI" id="CHEBI:456216"/>
    </ligand>
</feature>
<feature type="sequence conflict" description="In Ref. 2; AAP18763." evidence="2" ref="2">
    <original>L</original>
    <variation>I</variation>
    <location>
        <position position="133"/>
    </location>
</feature>
<organism>
    <name type="scientific">Shigella flexneri</name>
    <dbReference type="NCBI Taxonomy" id="623"/>
    <lineage>
        <taxon>Bacteria</taxon>
        <taxon>Pseudomonadati</taxon>
        <taxon>Pseudomonadota</taxon>
        <taxon>Gammaproteobacteria</taxon>
        <taxon>Enterobacterales</taxon>
        <taxon>Enterobacteriaceae</taxon>
        <taxon>Shigella</taxon>
    </lineage>
</organism>
<reference key="1">
    <citation type="journal article" date="2002" name="Nucleic Acids Res.">
        <title>Genome sequence of Shigella flexneri 2a: insights into pathogenicity through comparison with genomes of Escherichia coli K12 and O157.</title>
        <authorList>
            <person name="Jin Q."/>
            <person name="Yuan Z."/>
            <person name="Xu J."/>
            <person name="Wang Y."/>
            <person name="Shen Y."/>
            <person name="Lu W."/>
            <person name="Wang J."/>
            <person name="Liu H."/>
            <person name="Yang J."/>
            <person name="Yang F."/>
            <person name="Zhang X."/>
            <person name="Zhang J."/>
            <person name="Yang G."/>
            <person name="Wu H."/>
            <person name="Qu D."/>
            <person name="Dong J."/>
            <person name="Sun L."/>
            <person name="Xue Y."/>
            <person name="Zhao A."/>
            <person name="Gao Y."/>
            <person name="Zhu J."/>
            <person name="Kan B."/>
            <person name="Ding K."/>
            <person name="Chen S."/>
            <person name="Cheng H."/>
            <person name="Yao Z."/>
            <person name="He B."/>
            <person name="Chen R."/>
            <person name="Ma D."/>
            <person name="Qiang B."/>
            <person name="Wen Y."/>
            <person name="Hou Y."/>
            <person name="Yu J."/>
        </authorList>
    </citation>
    <scope>NUCLEOTIDE SEQUENCE [LARGE SCALE GENOMIC DNA]</scope>
    <source>
        <strain>301 / Serotype 2a</strain>
    </source>
</reference>
<reference key="2">
    <citation type="journal article" date="2003" name="Infect. Immun.">
        <title>Complete genome sequence and comparative genomics of Shigella flexneri serotype 2a strain 2457T.</title>
        <authorList>
            <person name="Wei J."/>
            <person name="Goldberg M.B."/>
            <person name="Burland V."/>
            <person name="Venkatesan M.M."/>
            <person name="Deng W."/>
            <person name="Fournier G."/>
            <person name="Mayhew G.F."/>
            <person name="Plunkett G. III"/>
            <person name="Rose D.J."/>
            <person name="Darling A."/>
            <person name="Mau B."/>
            <person name="Perna N.T."/>
            <person name="Payne S.M."/>
            <person name="Runyen-Janecky L.J."/>
            <person name="Zhou S."/>
            <person name="Schwartz D.C."/>
            <person name="Blattner F.R."/>
        </authorList>
    </citation>
    <scope>NUCLEOTIDE SEQUENCE [LARGE SCALE GENOMIC DNA]</scope>
    <source>
        <strain>ATCC 700930 / 2457T / Serotype 2a</strain>
    </source>
</reference>
<evidence type="ECO:0000255" key="1">
    <source>
        <dbReference type="HAMAP-Rule" id="MF_00186"/>
    </source>
</evidence>
<evidence type="ECO:0000305" key="2"/>
<accession>Q7UB84</accession>
<accession>Q83IT8</accession>